<feature type="chain" id="PRO_1000063933" description="Methylenetetrahydrofolate--tRNA-(uracil-5-)-methyltransferase TrmFO">
    <location>
        <begin position="1"/>
        <end position="435"/>
    </location>
</feature>
<feature type="binding site" evidence="1">
    <location>
        <begin position="9"/>
        <end position="14"/>
    </location>
    <ligand>
        <name>FAD</name>
        <dbReference type="ChEBI" id="CHEBI:57692"/>
    </ligand>
</feature>
<keyword id="KW-0963">Cytoplasm</keyword>
<keyword id="KW-0274">FAD</keyword>
<keyword id="KW-0285">Flavoprotein</keyword>
<keyword id="KW-0489">Methyltransferase</keyword>
<keyword id="KW-0520">NAD</keyword>
<keyword id="KW-0521">NADP</keyword>
<keyword id="KW-0808">Transferase</keyword>
<keyword id="KW-0819">tRNA processing</keyword>
<proteinExistence type="inferred from homology"/>
<organism>
    <name type="scientific">Staphylococcus aureus (strain bovine RF122 / ET3-1)</name>
    <dbReference type="NCBI Taxonomy" id="273036"/>
    <lineage>
        <taxon>Bacteria</taxon>
        <taxon>Bacillati</taxon>
        <taxon>Bacillota</taxon>
        <taxon>Bacilli</taxon>
        <taxon>Bacillales</taxon>
        <taxon>Staphylococcaceae</taxon>
        <taxon>Staphylococcus</taxon>
    </lineage>
</organism>
<evidence type="ECO:0000255" key="1">
    <source>
        <dbReference type="HAMAP-Rule" id="MF_01037"/>
    </source>
</evidence>
<accession>Q2YXL7</accession>
<name>TRMFO_STAAB</name>
<protein>
    <recommendedName>
        <fullName evidence="1">Methylenetetrahydrofolate--tRNA-(uracil-5-)-methyltransferase TrmFO</fullName>
        <ecNumber evidence="1">2.1.1.74</ecNumber>
    </recommendedName>
    <alternativeName>
        <fullName evidence="1">Folate-dependent tRNA (uracil-5-)-methyltransferase</fullName>
    </alternativeName>
    <alternativeName>
        <fullName evidence="1">Folate-dependent tRNA(M-5-U54)-methyltransferase</fullName>
    </alternativeName>
</protein>
<sequence length="435" mass="48371">MTQTVNVIGAGLAGSEAAYQLAERGIKVNLIEMRPVKQTPAHHTDKFAELVCSNSLRGNALTNGVGVLKEEMRRLNSIIIEAADKARVPAGGALAVDRHDFSGYITETLKNHENITVINEEINAIPDGYTIIATGPLTTETLAQEIVDITGKDQLYFYDAAAPIIEKESIDMDKVYLKSRYDKGEAAYLNCPMTEDEFNRFYDAVLEAEVAPVNSFEKEKYFEGCMPFEVMAERGRKTLLFGPMKPVGLEDPKTGKRPYAVVQLRQDDAAGTLYNIVGFQTHLKWGAQKEVIKLIPGLENVDIVRYGVMHRNTFINSPDVLNEKYELISQPNIQFAGQMTGVEGYVESAASGLVAGINLAHKILGKGEVVFPRETMIGSMAYYISHAKNNKNFQPMNANFGLLPSLETRIKDKKERYEAQANRALDYLENFKKTL</sequence>
<reference key="1">
    <citation type="journal article" date="2007" name="PLoS ONE">
        <title>Molecular correlates of host specialization in Staphylococcus aureus.</title>
        <authorList>
            <person name="Herron-Olson L."/>
            <person name="Fitzgerald J.R."/>
            <person name="Musser J.M."/>
            <person name="Kapur V."/>
        </authorList>
    </citation>
    <scope>NUCLEOTIDE SEQUENCE [LARGE SCALE GENOMIC DNA]</scope>
    <source>
        <strain>bovine RF122 / ET3-1</strain>
    </source>
</reference>
<dbReference type="EC" id="2.1.1.74" evidence="1"/>
<dbReference type="EMBL" id="AJ938182">
    <property type="protein sequence ID" value="CAI80802.1"/>
    <property type="molecule type" value="Genomic_DNA"/>
</dbReference>
<dbReference type="RefSeq" id="WP_000195254.1">
    <property type="nucleotide sequence ID" value="NC_007622.1"/>
</dbReference>
<dbReference type="SMR" id="Q2YXL7"/>
<dbReference type="KEGG" id="sab:SAB1113"/>
<dbReference type="HOGENOM" id="CLU_033057_1_0_9"/>
<dbReference type="GO" id="GO:0005829">
    <property type="term" value="C:cytosol"/>
    <property type="evidence" value="ECO:0007669"/>
    <property type="project" value="TreeGrafter"/>
</dbReference>
<dbReference type="GO" id="GO:0050660">
    <property type="term" value="F:flavin adenine dinucleotide binding"/>
    <property type="evidence" value="ECO:0007669"/>
    <property type="project" value="UniProtKB-UniRule"/>
</dbReference>
<dbReference type="GO" id="GO:0047151">
    <property type="term" value="F:tRNA (uracil(54)-C5)-methyltransferase activity, 5,10-methylenetetrahydrofolate-dependent"/>
    <property type="evidence" value="ECO:0007669"/>
    <property type="project" value="UniProtKB-UniRule"/>
</dbReference>
<dbReference type="GO" id="GO:0030488">
    <property type="term" value="P:tRNA methylation"/>
    <property type="evidence" value="ECO:0007669"/>
    <property type="project" value="TreeGrafter"/>
</dbReference>
<dbReference type="GO" id="GO:0002098">
    <property type="term" value="P:tRNA wobble uridine modification"/>
    <property type="evidence" value="ECO:0007669"/>
    <property type="project" value="TreeGrafter"/>
</dbReference>
<dbReference type="FunFam" id="3.50.50.60:FF:000035">
    <property type="entry name" value="Methylenetetrahydrofolate--tRNA-(uracil-5-)-methyltransferase TrmFO"/>
    <property type="match status" value="1"/>
</dbReference>
<dbReference type="FunFam" id="3.50.50.60:FF:000040">
    <property type="entry name" value="Methylenetetrahydrofolate--tRNA-(uracil-5-)-methyltransferase TrmFO"/>
    <property type="match status" value="1"/>
</dbReference>
<dbReference type="Gene3D" id="3.50.50.60">
    <property type="entry name" value="FAD/NAD(P)-binding domain"/>
    <property type="match status" value="2"/>
</dbReference>
<dbReference type="HAMAP" id="MF_01037">
    <property type="entry name" value="TrmFO"/>
    <property type="match status" value="1"/>
</dbReference>
<dbReference type="InterPro" id="IPR036188">
    <property type="entry name" value="FAD/NAD-bd_sf"/>
</dbReference>
<dbReference type="InterPro" id="IPR002218">
    <property type="entry name" value="MnmG-rel"/>
</dbReference>
<dbReference type="InterPro" id="IPR020595">
    <property type="entry name" value="MnmG-rel_CS"/>
</dbReference>
<dbReference type="InterPro" id="IPR040131">
    <property type="entry name" value="MnmG_N"/>
</dbReference>
<dbReference type="InterPro" id="IPR004417">
    <property type="entry name" value="TrmFO"/>
</dbReference>
<dbReference type="NCBIfam" id="TIGR00137">
    <property type="entry name" value="gid_trmFO"/>
    <property type="match status" value="1"/>
</dbReference>
<dbReference type="NCBIfam" id="NF003739">
    <property type="entry name" value="PRK05335.1"/>
    <property type="match status" value="1"/>
</dbReference>
<dbReference type="PANTHER" id="PTHR11806">
    <property type="entry name" value="GLUCOSE INHIBITED DIVISION PROTEIN A"/>
    <property type="match status" value="1"/>
</dbReference>
<dbReference type="PANTHER" id="PTHR11806:SF2">
    <property type="entry name" value="METHYLENETETRAHYDROFOLATE--TRNA-(URACIL-5-)-METHYLTRANSFERASE TRMFO"/>
    <property type="match status" value="1"/>
</dbReference>
<dbReference type="Pfam" id="PF01134">
    <property type="entry name" value="GIDA"/>
    <property type="match status" value="1"/>
</dbReference>
<dbReference type="SUPFAM" id="SSF51905">
    <property type="entry name" value="FAD/NAD(P)-binding domain"/>
    <property type="match status" value="1"/>
</dbReference>
<dbReference type="PROSITE" id="PS01281">
    <property type="entry name" value="GIDA_2"/>
    <property type="match status" value="1"/>
</dbReference>
<gene>
    <name evidence="1" type="primary">trmFO</name>
    <name type="synonym">gid</name>
    <name type="ordered locus">SAB1113</name>
</gene>
<comment type="function">
    <text evidence="1">Catalyzes the folate-dependent formation of 5-methyl-uridine at position 54 (M-5-U54) in all tRNAs.</text>
</comment>
<comment type="catalytic activity">
    <reaction evidence="1">
        <text>uridine(54) in tRNA + (6R)-5,10-methylene-5,6,7,8-tetrahydrofolate + NADH + H(+) = 5-methyluridine(54) in tRNA + (6S)-5,6,7,8-tetrahydrofolate + NAD(+)</text>
        <dbReference type="Rhea" id="RHEA:16873"/>
        <dbReference type="Rhea" id="RHEA-COMP:10167"/>
        <dbReference type="Rhea" id="RHEA-COMP:10193"/>
        <dbReference type="ChEBI" id="CHEBI:15378"/>
        <dbReference type="ChEBI" id="CHEBI:15636"/>
        <dbReference type="ChEBI" id="CHEBI:57453"/>
        <dbReference type="ChEBI" id="CHEBI:57540"/>
        <dbReference type="ChEBI" id="CHEBI:57945"/>
        <dbReference type="ChEBI" id="CHEBI:65315"/>
        <dbReference type="ChEBI" id="CHEBI:74447"/>
        <dbReference type="EC" id="2.1.1.74"/>
    </reaction>
</comment>
<comment type="catalytic activity">
    <reaction evidence="1">
        <text>uridine(54) in tRNA + (6R)-5,10-methylene-5,6,7,8-tetrahydrofolate + NADPH + H(+) = 5-methyluridine(54) in tRNA + (6S)-5,6,7,8-tetrahydrofolate + NADP(+)</text>
        <dbReference type="Rhea" id="RHEA:62372"/>
        <dbReference type="Rhea" id="RHEA-COMP:10167"/>
        <dbReference type="Rhea" id="RHEA-COMP:10193"/>
        <dbReference type="ChEBI" id="CHEBI:15378"/>
        <dbReference type="ChEBI" id="CHEBI:15636"/>
        <dbReference type="ChEBI" id="CHEBI:57453"/>
        <dbReference type="ChEBI" id="CHEBI:57783"/>
        <dbReference type="ChEBI" id="CHEBI:58349"/>
        <dbReference type="ChEBI" id="CHEBI:65315"/>
        <dbReference type="ChEBI" id="CHEBI:74447"/>
        <dbReference type="EC" id="2.1.1.74"/>
    </reaction>
</comment>
<comment type="cofactor">
    <cofactor evidence="1">
        <name>FAD</name>
        <dbReference type="ChEBI" id="CHEBI:57692"/>
    </cofactor>
</comment>
<comment type="subcellular location">
    <subcellularLocation>
        <location evidence="1">Cytoplasm</location>
    </subcellularLocation>
</comment>
<comment type="similarity">
    <text evidence="1">Belongs to the MnmG family. TrmFO subfamily.</text>
</comment>